<keyword id="KW-0028">Amino-acid biosynthesis</keyword>
<keyword id="KW-0170">Cobalt</keyword>
<keyword id="KW-0220">Diaminopimelate biosynthesis</keyword>
<keyword id="KW-0378">Hydrolase</keyword>
<keyword id="KW-0457">Lysine biosynthesis</keyword>
<keyword id="KW-0479">Metal-binding</keyword>
<keyword id="KW-1185">Reference proteome</keyword>
<keyword id="KW-0862">Zinc</keyword>
<evidence type="ECO:0000255" key="1">
    <source>
        <dbReference type="HAMAP-Rule" id="MF_01690"/>
    </source>
</evidence>
<evidence type="ECO:0000305" key="2"/>
<proteinExistence type="inferred from homology"/>
<accession>Q2KD47</accession>
<feature type="chain" id="PRO_0000375679" description="Succinyl-diaminopimelate desuccinylase">
    <location>
        <begin position="1"/>
        <end position="397"/>
    </location>
</feature>
<feature type="active site" evidence="1">
    <location>
        <position position="75"/>
    </location>
</feature>
<feature type="active site" description="Proton acceptor" evidence="1">
    <location>
        <position position="140"/>
    </location>
</feature>
<feature type="binding site" evidence="1">
    <location>
        <position position="73"/>
    </location>
    <ligand>
        <name>Zn(2+)</name>
        <dbReference type="ChEBI" id="CHEBI:29105"/>
        <label>1</label>
    </ligand>
</feature>
<feature type="binding site" evidence="1">
    <location>
        <position position="106"/>
    </location>
    <ligand>
        <name>Zn(2+)</name>
        <dbReference type="ChEBI" id="CHEBI:29105"/>
        <label>1</label>
    </ligand>
</feature>
<feature type="binding site" evidence="1">
    <location>
        <position position="106"/>
    </location>
    <ligand>
        <name>Zn(2+)</name>
        <dbReference type="ChEBI" id="CHEBI:29105"/>
        <label>2</label>
    </ligand>
</feature>
<feature type="binding site" evidence="1">
    <location>
        <position position="141"/>
    </location>
    <ligand>
        <name>Zn(2+)</name>
        <dbReference type="ChEBI" id="CHEBI:29105"/>
        <label>2</label>
    </ligand>
</feature>
<feature type="binding site" evidence="1">
    <location>
        <position position="169"/>
    </location>
    <ligand>
        <name>Zn(2+)</name>
        <dbReference type="ChEBI" id="CHEBI:29105"/>
        <label>1</label>
    </ligand>
</feature>
<feature type="binding site" evidence="1">
    <location>
        <position position="366"/>
    </location>
    <ligand>
        <name>Zn(2+)</name>
        <dbReference type="ChEBI" id="CHEBI:29105"/>
        <label>2</label>
    </ligand>
</feature>
<gene>
    <name evidence="1" type="primary">dapE</name>
    <name type="ordered locus">RHE_CH00417</name>
</gene>
<name>DAPE_RHIEC</name>
<dbReference type="EC" id="3.5.1.18" evidence="1"/>
<dbReference type="EMBL" id="CP000133">
    <property type="protein sequence ID" value="ABC89239.1"/>
    <property type="status" value="ALT_INIT"/>
    <property type="molecule type" value="Genomic_DNA"/>
</dbReference>
<dbReference type="RefSeq" id="WP_042117802.1">
    <property type="nucleotide sequence ID" value="NC_007761.1"/>
</dbReference>
<dbReference type="SMR" id="Q2KD47"/>
<dbReference type="KEGG" id="ret:RHE_CH00417"/>
<dbReference type="eggNOG" id="COG0624">
    <property type="taxonomic scope" value="Bacteria"/>
</dbReference>
<dbReference type="HOGENOM" id="CLU_021802_4_0_5"/>
<dbReference type="OrthoDB" id="9809784at2"/>
<dbReference type="UniPathway" id="UPA00034">
    <property type="reaction ID" value="UER00021"/>
</dbReference>
<dbReference type="Proteomes" id="UP000001936">
    <property type="component" value="Chromosome"/>
</dbReference>
<dbReference type="GO" id="GO:0008777">
    <property type="term" value="F:acetylornithine deacetylase activity"/>
    <property type="evidence" value="ECO:0007669"/>
    <property type="project" value="TreeGrafter"/>
</dbReference>
<dbReference type="GO" id="GO:0050897">
    <property type="term" value="F:cobalt ion binding"/>
    <property type="evidence" value="ECO:0007669"/>
    <property type="project" value="UniProtKB-UniRule"/>
</dbReference>
<dbReference type="GO" id="GO:0009014">
    <property type="term" value="F:succinyl-diaminopimelate desuccinylase activity"/>
    <property type="evidence" value="ECO:0007669"/>
    <property type="project" value="UniProtKB-UniRule"/>
</dbReference>
<dbReference type="GO" id="GO:0008270">
    <property type="term" value="F:zinc ion binding"/>
    <property type="evidence" value="ECO:0007669"/>
    <property type="project" value="UniProtKB-UniRule"/>
</dbReference>
<dbReference type="GO" id="GO:0019877">
    <property type="term" value="P:diaminopimelate biosynthetic process"/>
    <property type="evidence" value="ECO:0007669"/>
    <property type="project" value="UniProtKB-UniRule"/>
</dbReference>
<dbReference type="GO" id="GO:0006526">
    <property type="term" value="P:L-arginine biosynthetic process"/>
    <property type="evidence" value="ECO:0007669"/>
    <property type="project" value="TreeGrafter"/>
</dbReference>
<dbReference type="GO" id="GO:0009089">
    <property type="term" value="P:lysine biosynthetic process via diaminopimelate"/>
    <property type="evidence" value="ECO:0007669"/>
    <property type="project" value="UniProtKB-UniRule"/>
</dbReference>
<dbReference type="CDD" id="cd03891">
    <property type="entry name" value="M20_DapE_proteobac"/>
    <property type="match status" value="1"/>
</dbReference>
<dbReference type="Gene3D" id="3.30.70.360">
    <property type="match status" value="1"/>
</dbReference>
<dbReference type="Gene3D" id="3.40.630.10">
    <property type="entry name" value="Zn peptidases"/>
    <property type="match status" value="2"/>
</dbReference>
<dbReference type="HAMAP" id="MF_01690">
    <property type="entry name" value="DapE"/>
    <property type="match status" value="1"/>
</dbReference>
<dbReference type="InterPro" id="IPR001261">
    <property type="entry name" value="ArgE/DapE_CS"/>
</dbReference>
<dbReference type="InterPro" id="IPR036264">
    <property type="entry name" value="Bact_exopeptidase_dim_dom"/>
</dbReference>
<dbReference type="InterPro" id="IPR005941">
    <property type="entry name" value="DapE_proteobac"/>
</dbReference>
<dbReference type="InterPro" id="IPR002933">
    <property type="entry name" value="Peptidase_M20"/>
</dbReference>
<dbReference type="InterPro" id="IPR011650">
    <property type="entry name" value="Peptidase_M20_dimer"/>
</dbReference>
<dbReference type="InterPro" id="IPR050072">
    <property type="entry name" value="Peptidase_M20A"/>
</dbReference>
<dbReference type="NCBIfam" id="TIGR01246">
    <property type="entry name" value="dapE_proteo"/>
    <property type="match status" value="1"/>
</dbReference>
<dbReference type="NCBIfam" id="NF009557">
    <property type="entry name" value="PRK13009.1"/>
    <property type="match status" value="1"/>
</dbReference>
<dbReference type="PANTHER" id="PTHR43808">
    <property type="entry name" value="ACETYLORNITHINE DEACETYLASE"/>
    <property type="match status" value="1"/>
</dbReference>
<dbReference type="PANTHER" id="PTHR43808:SF31">
    <property type="entry name" value="N-ACETYL-L-CITRULLINE DEACETYLASE"/>
    <property type="match status" value="1"/>
</dbReference>
<dbReference type="Pfam" id="PF07687">
    <property type="entry name" value="M20_dimer"/>
    <property type="match status" value="1"/>
</dbReference>
<dbReference type="Pfam" id="PF01546">
    <property type="entry name" value="Peptidase_M20"/>
    <property type="match status" value="1"/>
</dbReference>
<dbReference type="SUPFAM" id="SSF55031">
    <property type="entry name" value="Bacterial exopeptidase dimerisation domain"/>
    <property type="match status" value="1"/>
</dbReference>
<dbReference type="SUPFAM" id="SSF53187">
    <property type="entry name" value="Zn-dependent exopeptidases"/>
    <property type="match status" value="1"/>
</dbReference>
<dbReference type="PROSITE" id="PS00758">
    <property type="entry name" value="ARGE_DAPE_CPG2_1"/>
    <property type="match status" value="1"/>
</dbReference>
<dbReference type="PROSITE" id="PS00759">
    <property type="entry name" value="ARGE_DAPE_CPG2_2"/>
    <property type="match status" value="1"/>
</dbReference>
<comment type="function">
    <text evidence="1">Catalyzes the hydrolysis of N-succinyl-L,L-diaminopimelic acid (SDAP), forming succinate and LL-2,6-diaminopimelate (DAP), an intermediate involved in the bacterial biosynthesis of lysine and meso-diaminopimelic acid, an essential component of bacterial cell walls.</text>
</comment>
<comment type="catalytic activity">
    <reaction evidence="1">
        <text>N-succinyl-(2S,6S)-2,6-diaminopimelate + H2O = (2S,6S)-2,6-diaminopimelate + succinate</text>
        <dbReference type="Rhea" id="RHEA:22608"/>
        <dbReference type="ChEBI" id="CHEBI:15377"/>
        <dbReference type="ChEBI" id="CHEBI:30031"/>
        <dbReference type="ChEBI" id="CHEBI:57609"/>
        <dbReference type="ChEBI" id="CHEBI:58087"/>
        <dbReference type="EC" id="3.5.1.18"/>
    </reaction>
</comment>
<comment type="cofactor">
    <cofactor evidence="1">
        <name>Zn(2+)</name>
        <dbReference type="ChEBI" id="CHEBI:29105"/>
    </cofactor>
    <cofactor evidence="1">
        <name>Co(2+)</name>
        <dbReference type="ChEBI" id="CHEBI:48828"/>
    </cofactor>
    <text evidence="1">Binds 2 Zn(2+) or Co(2+) ions per subunit.</text>
</comment>
<comment type="pathway">
    <text evidence="1">Amino-acid biosynthesis; L-lysine biosynthesis via DAP pathway; LL-2,6-diaminopimelate from (S)-tetrahydrodipicolinate (succinylase route): step 3/3.</text>
</comment>
<comment type="subunit">
    <text evidence="1">Homodimer.</text>
</comment>
<comment type="similarity">
    <text evidence="1">Belongs to the peptidase M20A family. DapE subfamily.</text>
</comment>
<comment type="sequence caution" evidence="2">
    <conflict type="erroneous initiation">
        <sequence resource="EMBL-CDS" id="ABC89239"/>
    </conflict>
</comment>
<sequence>MTATDPVANLQTLIRCPSVTPAEGGALTALDAMLTPLGFTVDRVTAREEGTAAIENLYARLGRDGPHLMFAGHTDVVPVGDEAAWTHPPFAAEISNGELFGRGAVDMKGGIACFVAAVARHIEKSGPPAGSISFLVTGDEEGPAINGTIKLLQWAAERGERWDACLVGEPTNPDRLGDMIKIGRRGSLSGKITVHGVQGHAAYPHLADNPVRGLLQLTQALMDPPFDGGTDDFQPSNLEVTTVDVGNPATNVIPAKASASFNIRFNDSWTVETLRAEILRRLEAAAGNGQLRPGRPPAKYDIVWADRPSHVFLTRNNALIASLSSAIESVAGRSPALSTTGGTSDARFIKDYCPVVEFGLVGQTMHMVDERVAVADLETLTAIYQTFIDRWFAHAGS</sequence>
<reference key="1">
    <citation type="journal article" date="2006" name="Proc. Natl. Acad. Sci. U.S.A.">
        <title>The partitioned Rhizobium etli genome: genetic and metabolic redundancy in seven interacting replicons.</title>
        <authorList>
            <person name="Gonzalez V."/>
            <person name="Santamaria R.I."/>
            <person name="Bustos P."/>
            <person name="Hernandez-Gonzalez I."/>
            <person name="Medrano-Soto A."/>
            <person name="Moreno-Hagelsieb G."/>
            <person name="Janga S.C."/>
            <person name="Ramirez M.A."/>
            <person name="Jimenez-Jacinto V."/>
            <person name="Collado-Vides J."/>
            <person name="Davila G."/>
        </authorList>
    </citation>
    <scope>NUCLEOTIDE SEQUENCE [LARGE SCALE GENOMIC DNA]</scope>
    <source>
        <strain>ATCC 51251 / DSM 11541 / JCM 21823 / NBRC 15573 / CFN 42</strain>
    </source>
</reference>
<protein>
    <recommendedName>
        <fullName evidence="1">Succinyl-diaminopimelate desuccinylase</fullName>
        <shortName evidence="1">SDAP desuccinylase</shortName>
        <ecNumber evidence="1">3.5.1.18</ecNumber>
    </recommendedName>
    <alternativeName>
        <fullName evidence="1">N-succinyl-LL-2,6-diaminoheptanedioate amidohydrolase</fullName>
    </alternativeName>
</protein>
<organism>
    <name type="scientific">Rhizobium etli (strain ATCC 51251 / DSM 11541 / JCM 21823 / NBRC 15573 / CFN 42)</name>
    <dbReference type="NCBI Taxonomy" id="347834"/>
    <lineage>
        <taxon>Bacteria</taxon>
        <taxon>Pseudomonadati</taxon>
        <taxon>Pseudomonadota</taxon>
        <taxon>Alphaproteobacteria</taxon>
        <taxon>Hyphomicrobiales</taxon>
        <taxon>Rhizobiaceae</taxon>
        <taxon>Rhizobium/Agrobacterium group</taxon>
        <taxon>Rhizobium</taxon>
    </lineage>
</organism>